<keyword id="KW-0067">ATP-binding</keyword>
<keyword id="KW-0418">Kinase</keyword>
<keyword id="KW-0547">Nucleotide-binding</keyword>
<keyword id="KW-0808">Transferase</keyword>
<proteinExistence type="inferred from homology"/>
<evidence type="ECO:0000255" key="1">
    <source>
        <dbReference type="HAMAP-Rule" id="MF_01604"/>
    </source>
</evidence>
<gene>
    <name evidence="1" type="primary">thiK</name>
    <name type="ordered locus">SSPA1528</name>
</gene>
<feature type="chain" id="PRO_1000198100" description="Thiamine kinase">
    <location>
        <begin position="1"/>
        <end position="274"/>
    </location>
</feature>
<organism>
    <name type="scientific">Salmonella paratyphi A (strain AKU_12601)</name>
    <dbReference type="NCBI Taxonomy" id="554290"/>
    <lineage>
        <taxon>Bacteria</taxon>
        <taxon>Pseudomonadati</taxon>
        <taxon>Pseudomonadota</taxon>
        <taxon>Gammaproteobacteria</taxon>
        <taxon>Enterobacterales</taxon>
        <taxon>Enterobacteriaceae</taxon>
        <taxon>Salmonella</taxon>
    </lineage>
</organism>
<accession>B5BAG8</accession>
<protein>
    <recommendedName>
        <fullName evidence="1">Thiamine kinase</fullName>
        <ecNumber evidence="1">2.7.1.89</ecNumber>
    </recommendedName>
</protein>
<dbReference type="EC" id="2.7.1.89" evidence="1"/>
<dbReference type="EMBL" id="FM200053">
    <property type="protein sequence ID" value="CAR59711.1"/>
    <property type="molecule type" value="Genomic_DNA"/>
</dbReference>
<dbReference type="RefSeq" id="WP_001257343.1">
    <property type="nucleotide sequence ID" value="NC_011147.1"/>
</dbReference>
<dbReference type="SMR" id="B5BAG8"/>
<dbReference type="KEGG" id="sek:SSPA1528"/>
<dbReference type="HOGENOM" id="CLU_055115_2_1_6"/>
<dbReference type="UniPathway" id="UPA00060">
    <property type="reaction ID" value="UER00596"/>
</dbReference>
<dbReference type="Proteomes" id="UP000001869">
    <property type="component" value="Chromosome"/>
</dbReference>
<dbReference type="GO" id="GO:0005524">
    <property type="term" value="F:ATP binding"/>
    <property type="evidence" value="ECO:0007669"/>
    <property type="project" value="UniProtKB-KW"/>
</dbReference>
<dbReference type="GO" id="GO:0019165">
    <property type="term" value="F:thiamine kinase activity"/>
    <property type="evidence" value="ECO:0007669"/>
    <property type="project" value="UniProtKB-UniRule"/>
</dbReference>
<dbReference type="GO" id="GO:0009229">
    <property type="term" value="P:thiamine diphosphate biosynthetic process"/>
    <property type="evidence" value="ECO:0007669"/>
    <property type="project" value="UniProtKB-UniRule"/>
</dbReference>
<dbReference type="GO" id="GO:0006772">
    <property type="term" value="P:thiamine metabolic process"/>
    <property type="evidence" value="ECO:0007669"/>
    <property type="project" value="InterPro"/>
</dbReference>
<dbReference type="Gene3D" id="3.90.1200.10">
    <property type="match status" value="1"/>
</dbReference>
<dbReference type="HAMAP" id="MF_01604">
    <property type="entry name" value="Thiamine_kinase"/>
    <property type="match status" value="1"/>
</dbReference>
<dbReference type="InterPro" id="IPR002575">
    <property type="entry name" value="Aminoglycoside_PTrfase"/>
</dbReference>
<dbReference type="InterPro" id="IPR011009">
    <property type="entry name" value="Kinase-like_dom_sf"/>
</dbReference>
<dbReference type="InterPro" id="IPR014093">
    <property type="entry name" value="Thiamine_kinase"/>
</dbReference>
<dbReference type="NCBIfam" id="NF007620">
    <property type="entry name" value="PRK10271.1"/>
    <property type="match status" value="1"/>
</dbReference>
<dbReference type="NCBIfam" id="TIGR02721">
    <property type="entry name" value="ycfN_thiK"/>
    <property type="match status" value="1"/>
</dbReference>
<dbReference type="Pfam" id="PF01636">
    <property type="entry name" value="APH"/>
    <property type="match status" value="1"/>
</dbReference>
<dbReference type="SUPFAM" id="SSF56112">
    <property type="entry name" value="Protein kinase-like (PK-like)"/>
    <property type="match status" value="1"/>
</dbReference>
<comment type="function">
    <text evidence="1">Catalyzes the ATP-dependent phosphorylation of thiamine to thiamine phosphate. Is involved in thiamine salvage.</text>
</comment>
<comment type="catalytic activity">
    <reaction evidence="1">
        <text>thiamine + ATP = thiamine phosphate + ADP + H(+)</text>
        <dbReference type="Rhea" id="RHEA:12012"/>
        <dbReference type="ChEBI" id="CHEBI:15378"/>
        <dbReference type="ChEBI" id="CHEBI:18385"/>
        <dbReference type="ChEBI" id="CHEBI:30616"/>
        <dbReference type="ChEBI" id="CHEBI:37575"/>
        <dbReference type="ChEBI" id="CHEBI:456216"/>
        <dbReference type="EC" id="2.7.1.89"/>
    </reaction>
    <physiologicalReaction direction="left-to-right" evidence="1">
        <dbReference type="Rhea" id="RHEA:12013"/>
    </physiologicalReaction>
</comment>
<comment type="pathway">
    <text evidence="1">Cofactor biosynthesis; thiamine diphosphate biosynthesis; thiamine phosphate from thiamine: step 1/1.</text>
</comment>
<comment type="similarity">
    <text evidence="1">Belongs to the thiamine kinase family.</text>
</comment>
<sequence length="274" mass="31910">MRSNNNNPLTRDEILSRYFPQYRPAVTASQGLSGGSCIIAHDTHRIVLRRHHDPDAPPAHFLRHHRALSQLPASLAPRALFYTPGWMAVEYLHGVVNSALPDADELAALLYHLHQQPHFGWRIALSPLLAQYWSCCDPARRTPFWLRRLKQLQKNGEPRPLRLAPLHMDVHGDNIVLTSAGLRLIDWEYAGDGDIALELAAVWVEDERQHRQLADAYAARARIDARQLWRQIRLWHPWVIMLKAGWFEYRWRQTGEQQFIRLADETWRQLRMKG</sequence>
<name>THIK_SALPK</name>
<reference key="1">
    <citation type="journal article" date="2009" name="BMC Genomics">
        <title>Pseudogene accumulation in the evolutionary histories of Salmonella enterica serovars Paratyphi A and Typhi.</title>
        <authorList>
            <person name="Holt K.E."/>
            <person name="Thomson N.R."/>
            <person name="Wain J."/>
            <person name="Langridge G.C."/>
            <person name="Hasan R."/>
            <person name="Bhutta Z.A."/>
            <person name="Quail M.A."/>
            <person name="Norbertczak H."/>
            <person name="Walker D."/>
            <person name="Simmonds M."/>
            <person name="White B."/>
            <person name="Bason N."/>
            <person name="Mungall K."/>
            <person name="Dougan G."/>
            <person name="Parkhill J."/>
        </authorList>
    </citation>
    <scope>NUCLEOTIDE SEQUENCE [LARGE SCALE GENOMIC DNA]</scope>
    <source>
        <strain>AKU_12601</strain>
    </source>
</reference>